<dbReference type="EC" id="2.3.2.23"/>
<dbReference type="EMBL" id="BC111185">
    <property type="protein sequence ID" value="AAI11186.1"/>
    <property type="molecule type" value="mRNA"/>
</dbReference>
<dbReference type="RefSeq" id="NP_001033132.1">
    <property type="nucleotide sequence ID" value="NM_001038043.1"/>
</dbReference>
<dbReference type="RefSeq" id="XP_024831884.1">
    <property type="nucleotide sequence ID" value="XM_024976116.2"/>
</dbReference>
<dbReference type="RefSeq" id="XP_024831885.1">
    <property type="nucleotide sequence ID" value="XM_024976117.2"/>
</dbReference>
<dbReference type="SMR" id="Q2TA03"/>
<dbReference type="FunCoup" id="Q2TA03">
    <property type="interactions" value="4622"/>
</dbReference>
<dbReference type="STRING" id="9913.ENSBTAP00000069660"/>
<dbReference type="PaxDb" id="9913-ENSBTAP00000021109"/>
<dbReference type="Ensembl" id="ENSBTAT00000021109.5">
    <property type="protein sequence ID" value="ENSBTAP00000021109.4"/>
    <property type="gene ID" value="ENSBTAG00000015882.6"/>
</dbReference>
<dbReference type="GeneID" id="506103"/>
<dbReference type="KEGG" id="bta:506103"/>
<dbReference type="CTD" id="118424"/>
<dbReference type="VEuPathDB" id="HostDB:ENSBTAG00000015882"/>
<dbReference type="VGNC" id="VGNC:36586">
    <property type="gene designation" value="UBE2J2"/>
</dbReference>
<dbReference type="eggNOG" id="KOG0894">
    <property type="taxonomic scope" value="Eukaryota"/>
</dbReference>
<dbReference type="GeneTree" id="ENSGT00940000156173"/>
<dbReference type="HOGENOM" id="CLU_041481_1_2_1"/>
<dbReference type="InParanoid" id="Q2TA03"/>
<dbReference type="OMA" id="GWSVATI"/>
<dbReference type="OrthoDB" id="1158011at2759"/>
<dbReference type="TreeFam" id="TF101123"/>
<dbReference type="Reactome" id="R-BTA-9609523">
    <property type="pathway name" value="Insertion of tail-anchored proteins into the endoplasmic reticulum membrane"/>
</dbReference>
<dbReference type="Reactome" id="R-BTA-983168">
    <property type="pathway name" value="Antigen processing: Ubiquitination &amp; Proteasome degradation"/>
</dbReference>
<dbReference type="UniPathway" id="UPA00143"/>
<dbReference type="Proteomes" id="UP000009136">
    <property type="component" value="Chromosome 16"/>
</dbReference>
<dbReference type="Bgee" id="ENSBTAG00000015882">
    <property type="expression patterns" value="Expressed in spermatid and 102 other cell types or tissues"/>
</dbReference>
<dbReference type="GO" id="GO:0005783">
    <property type="term" value="C:endoplasmic reticulum"/>
    <property type="evidence" value="ECO:0000318"/>
    <property type="project" value="GO_Central"/>
</dbReference>
<dbReference type="GO" id="GO:0005789">
    <property type="term" value="C:endoplasmic reticulum membrane"/>
    <property type="evidence" value="ECO:0007669"/>
    <property type="project" value="UniProtKB-SubCell"/>
</dbReference>
<dbReference type="GO" id="GO:0005634">
    <property type="term" value="C:nucleus"/>
    <property type="evidence" value="ECO:0000318"/>
    <property type="project" value="GO_Central"/>
</dbReference>
<dbReference type="GO" id="GO:0005524">
    <property type="term" value="F:ATP binding"/>
    <property type="evidence" value="ECO:0007669"/>
    <property type="project" value="UniProtKB-KW"/>
</dbReference>
<dbReference type="GO" id="GO:0061631">
    <property type="term" value="F:ubiquitin conjugating enzyme activity"/>
    <property type="evidence" value="ECO:0000250"/>
    <property type="project" value="UniProtKB"/>
</dbReference>
<dbReference type="GO" id="GO:0036503">
    <property type="term" value="P:ERAD pathway"/>
    <property type="evidence" value="ECO:0000318"/>
    <property type="project" value="GO_Central"/>
</dbReference>
<dbReference type="GO" id="GO:0085020">
    <property type="term" value="P:protein K6-linked ubiquitination"/>
    <property type="evidence" value="ECO:0000250"/>
    <property type="project" value="UniProtKB"/>
</dbReference>
<dbReference type="GO" id="GO:0000209">
    <property type="term" value="P:protein polyubiquitination"/>
    <property type="evidence" value="ECO:0000318"/>
    <property type="project" value="GO_Central"/>
</dbReference>
<dbReference type="GO" id="GO:0006986">
    <property type="term" value="P:response to unfolded protein"/>
    <property type="evidence" value="ECO:0007669"/>
    <property type="project" value="UniProtKB-KW"/>
</dbReference>
<dbReference type="CDD" id="cd23799">
    <property type="entry name" value="UBCc_UBE2J"/>
    <property type="match status" value="1"/>
</dbReference>
<dbReference type="FunFam" id="3.10.110.10:FF:000023">
    <property type="entry name" value="Ubiquitin-conjugating enzyme E2 J2"/>
    <property type="match status" value="1"/>
</dbReference>
<dbReference type="Gene3D" id="3.10.110.10">
    <property type="entry name" value="Ubiquitin Conjugating Enzyme"/>
    <property type="match status" value="1"/>
</dbReference>
<dbReference type="InterPro" id="IPR050113">
    <property type="entry name" value="Ub_conjugating_enzyme"/>
</dbReference>
<dbReference type="InterPro" id="IPR000608">
    <property type="entry name" value="UBQ-conjugat_E2_core"/>
</dbReference>
<dbReference type="InterPro" id="IPR016135">
    <property type="entry name" value="UBQ-conjugating_enzyme/RWD"/>
</dbReference>
<dbReference type="PANTHER" id="PTHR24067">
    <property type="entry name" value="UBIQUITIN-CONJUGATING ENZYME E2"/>
    <property type="match status" value="1"/>
</dbReference>
<dbReference type="Pfam" id="PF00179">
    <property type="entry name" value="UQ_con"/>
    <property type="match status" value="1"/>
</dbReference>
<dbReference type="SMART" id="SM00212">
    <property type="entry name" value="UBCc"/>
    <property type="match status" value="1"/>
</dbReference>
<dbReference type="SUPFAM" id="SSF54495">
    <property type="entry name" value="UBC-like"/>
    <property type="match status" value="1"/>
</dbReference>
<dbReference type="PROSITE" id="PS50127">
    <property type="entry name" value="UBC_2"/>
    <property type="match status" value="1"/>
</dbReference>
<name>UB2J2_BOVIN</name>
<reference key="1">
    <citation type="submission" date="2005-12" db="EMBL/GenBank/DDBJ databases">
        <authorList>
            <consortium name="NIH - Mammalian Gene Collection (MGC) project"/>
        </authorList>
    </citation>
    <scope>NUCLEOTIDE SEQUENCE [LARGE SCALE MRNA]</scope>
    <source>
        <strain>Crossbred X Angus</strain>
        <tissue>Liver</tissue>
    </source>
</reference>
<comment type="function">
    <text evidence="1 2">Catalyzes the covalent attachment of ubiquitin to other proteins. Seems to function in the selective degradation of misfolded membrane proteins from the endoplasmic reticulum (ERAD) (By similarity). In cooperation with the GATOR2 complex, catalyzes 'Lys-6'-linked ubiquitination of NPRL2 (By similarity).</text>
</comment>
<comment type="catalytic activity">
    <reaction evidence="5">
        <text>S-ubiquitinyl-[E1 ubiquitin-activating enzyme]-L-cysteine + [E2 ubiquitin-conjugating enzyme]-L-cysteine = [E1 ubiquitin-activating enzyme]-L-cysteine + S-ubiquitinyl-[E2 ubiquitin-conjugating enzyme]-L-cysteine.</text>
        <dbReference type="EC" id="2.3.2.23"/>
    </reaction>
</comment>
<comment type="pathway">
    <text evidence="5">Protein modification; protein ubiquitination.</text>
</comment>
<comment type="subcellular location">
    <subcellularLocation>
        <location evidence="3">Endoplasmic reticulum membrane</location>
        <topology evidence="3">Single-pass type IV membrane protein</topology>
    </subcellularLocation>
</comment>
<comment type="similarity">
    <text evidence="5">Belongs to the ubiquitin-conjugating enzyme family.</text>
</comment>
<sequence>MSSNSVKRAPTTATQRLKQDYLRIKKDPVPYICAEPLPSNILEWHYVVRGPEMTPYEGGYYHGKLIFPREFPFKPPSIYMITPNGRFKCNTRLCLSITDFHPDTWNPAWSVSTILTGLLSFMVEKGPTLGSIETSDFTKRQLAAQSLVFNLKDKVFCELFPEVVEEIKQKQKAQDELSSRPQALPLPDVVPDGETHHGQHGLPLLNGHAPGAGPHLAGLQQANRHHGLLGGALANLFVIVGFAAFAYTVKYVLRSIAQE</sequence>
<feature type="chain" id="PRO_0000245041" description="Ubiquitin-conjugating enzyme E2 J2">
    <location>
        <begin position="1"/>
        <end position="259"/>
    </location>
</feature>
<feature type="topological domain" description="Cytoplasmic" evidence="4">
    <location>
        <begin position="1"/>
        <end position="226"/>
    </location>
</feature>
<feature type="transmembrane region" description="Helical; Anchor for type IV membrane protein" evidence="4">
    <location>
        <begin position="227"/>
        <end position="247"/>
    </location>
</feature>
<feature type="topological domain" description="Lumenal" evidence="4">
    <location>
        <begin position="248"/>
        <end position="259"/>
    </location>
</feature>
<feature type="domain" description="UBC core" evidence="5">
    <location>
        <begin position="12"/>
        <end position="162"/>
    </location>
</feature>
<feature type="region of interest" description="Disordered" evidence="6">
    <location>
        <begin position="174"/>
        <end position="200"/>
    </location>
</feature>
<feature type="active site" description="Glycyl thioester intermediate" evidence="5">
    <location>
        <position position="94"/>
    </location>
</feature>
<gene>
    <name type="primary">UBE2J2</name>
</gene>
<proteinExistence type="evidence at transcript level"/>
<organism>
    <name type="scientific">Bos taurus</name>
    <name type="common">Bovine</name>
    <dbReference type="NCBI Taxonomy" id="9913"/>
    <lineage>
        <taxon>Eukaryota</taxon>
        <taxon>Metazoa</taxon>
        <taxon>Chordata</taxon>
        <taxon>Craniata</taxon>
        <taxon>Vertebrata</taxon>
        <taxon>Euteleostomi</taxon>
        <taxon>Mammalia</taxon>
        <taxon>Eutheria</taxon>
        <taxon>Laurasiatheria</taxon>
        <taxon>Artiodactyla</taxon>
        <taxon>Ruminantia</taxon>
        <taxon>Pecora</taxon>
        <taxon>Bovidae</taxon>
        <taxon>Bovinae</taxon>
        <taxon>Bos</taxon>
    </lineage>
</organism>
<evidence type="ECO:0000250" key="1">
    <source>
        <dbReference type="UniProtKB" id="Q6P073"/>
    </source>
</evidence>
<evidence type="ECO:0000250" key="2">
    <source>
        <dbReference type="UniProtKB" id="Q8N2K1"/>
    </source>
</evidence>
<evidence type="ECO:0000250" key="3">
    <source>
        <dbReference type="UniProtKB" id="Q9Y385"/>
    </source>
</evidence>
<evidence type="ECO:0000255" key="4"/>
<evidence type="ECO:0000255" key="5">
    <source>
        <dbReference type="PROSITE-ProRule" id="PRU00388"/>
    </source>
</evidence>
<evidence type="ECO:0000256" key="6">
    <source>
        <dbReference type="SAM" id="MobiDB-lite"/>
    </source>
</evidence>
<protein>
    <recommendedName>
        <fullName>Ubiquitin-conjugating enzyme E2 J2</fullName>
        <ecNumber>2.3.2.23</ecNumber>
    </recommendedName>
    <alternativeName>
        <fullName>E2 ubiquitin-conjugating enzyme J2</fullName>
    </alternativeName>
</protein>
<accession>Q2TA03</accession>
<keyword id="KW-0067">ATP-binding</keyword>
<keyword id="KW-0256">Endoplasmic reticulum</keyword>
<keyword id="KW-0472">Membrane</keyword>
<keyword id="KW-0547">Nucleotide-binding</keyword>
<keyword id="KW-1185">Reference proteome</keyword>
<keyword id="KW-0808">Transferase</keyword>
<keyword id="KW-0812">Transmembrane</keyword>
<keyword id="KW-1133">Transmembrane helix</keyword>
<keyword id="KW-0833">Ubl conjugation pathway</keyword>
<keyword id="KW-0834">Unfolded protein response</keyword>